<reference key="1">
    <citation type="journal article" date="1997" name="Nature">
        <title>The complete genome sequence of the hyperthermophilic, sulphate-reducing archaeon Archaeoglobus fulgidus.</title>
        <authorList>
            <person name="Klenk H.-P."/>
            <person name="Clayton R.A."/>
            <person name="Tomb J.-F."/>
            <person name="White O."/>
            <person name="Nelson K.E."/>
            <person name="Ketchum K.A."/>
            <person name="Dodson R.J."/>
            <person name="Gwinn M.L."/>
            <person name="Hickey E.K."/>
            <person name="Peterson J.D."/>
            <person name="Richardson D.L."/>
            <person name="Kerlavage A.R."/>
            <person name="Graham D.E."/>
            <person name="Kyrpides N.C."/>
            <person name="Fleischmann R.D."/>
            <person name="Quackenbush J."/>
            <person name="Lee N.H."/>
            <person name="Sutton G.G."/>
            <person name="Gill S.R."/>
            <person name="Kirkness E.F."/>
            <person name="Dougherty B.A."/>
            <person name="McKenney K."/>
            <person name="Adams M.D."/>
            <person name="Loftus B.J."/>
            <person name="Peterson S.N."/>
            <person name="Reich C.I."/>
            <person name="McNeil L.K."/>
            <person name="Badger J.H."/>
            <person name="Glodek A."/>
            <person name="Zhou L."/>
            <person name="Overbeek R."/>
            <person name="Gocayne J.D."/>
            <person name="Weidman J.F."/>
            <person name="McDonald L.A."/>
            <person name="Utterback T.R."/>
            <person name="Cotton M.D."/>
            <person name="Spriggs T."/>
            <person name="Artiach P."/>
            <person name="Kaine B.P."/>
            <person name="Sykes S.M."/>
            <person name="Sadow P.W."/>
            <person name="D'Andrea K.P."/>
            <person name="Bowman C."/>
            <person name="Fujii C."/>
            <person name="Garland S.A."/>
            <person name="Mason T.M."/>
            <person name="Olsen G.J."/>
            <person name="Fraser C.M."/>
            <person name="Smith H.O."/>
            <person name="Woese C.R."/>
            <person name="Venter J.C."/>
        </authorList>
    </citation>
    <scope>NUCLEOTIDE SEQUENCE [LARGE SCALE GENOMIC DNA]</scope>
    <source>
        <strain>ATCC 49558 / DSM 4304 / JCM 9628 / NBRC 100126 / VC-16</strain>
    </source>
</reference>
<gene>
    <name type="ordered locus">AF_0698</name>
</gene>
<organism>
    <name type="scientific">Archaeoglobus fulgidus (strain ATCC 49558 / DSM 4304 / JCM 9628 / NBRC 100126 / VC-16)</name>
    <dbReference type="NCBI Taxonomy" id="224325"/>
    <lineage>
        <taxon>Archaea</taxon>
        <taxon>Methanobacteriati</taxon>
        <taxon>Methanobacteriota</taxon>
        <taxon>Archaeoglobi</taxon>
        <taxon>Archaeoglobales</taxon>
        <taxon>Archaeoglobaceae</taxon>
        <taxon>Archaeoglobus</taxon>
    </lineage>
</organism>
<protein>
    <recommendedName>
        <fullName>Uncharacterized protein AF_0698</fullName>
    </recommendedName>
</protein>
<keyword id="KW-1185">Reference proteome</keyword>
<proteinExistence type="predicted"/>
<accession>O29560</accession>
<sequence>MLCHARLEVESKDPEAVVKALKPDDPEWCSCWADNRIVIEVRVEKIGTLLSALDDYLMNIKMCEGVLEVLG</sequence>
<name>Y698_ARCFU</name>
<dbReference type="EMBL" id="AE000782">
    <property type="protein sequence ID" value="AAB90546.1"/>
    <property type="molecule type" value="Genomic_DNA"/>
</dbReference>
<dbReference type="PIR" id="B69337">
    <property type="entry name" value="B69337"/>
</dbReference>
<dbReference type="SMR" id="O29560"/>
<dbReference type="STRING" id="224325.AF_0698"/>
<dbReference type="PaxDb" id="224325-AF_0698"/>
<dbReference type="EnsemblBacteria" id="AAB90546">
    <property type="protein sequence ID" value="AAB90546"/>
    <property type="gene ID" value="AF_0698"/>
</dbReference>
<dbReference type="KEGG" id="afu:AF_0698"/>
<dbReference type="eggNOG" id="arCOG01354">
    <property type="taxonomic scope" value="Archaea"/>
</dbReference>
<dbReference type="HOGENOM" id="CLU_169408_2_1_2"/>
<dbReference type="OrthoDB" id="51591at2157"/>
<dbReference type="Proteomes" id="UP000002199">
    <property type="component" value="Chromosome"/>
</dbReference>
<dbReference type="NCBIfam" id="NF011470">
    <property type="entry name" value="PRK14887.1"/>
    <property type="match status" value="1"/>
</dbReference>
<feature type="chain" id="PRO_0000127910" description="Uncharacterized protein AF_0698">
    <location>
        <begin position="1"/>
        <end position="71"/>
    </location>
</feature>